<accession>Q7VHA5</accession>
<sequence>MRYFIGIASKNHIQIGQAGGFCQLCHGKAAPLKRMKQNDKIIYYSPKLTMESKEPYQAFTALGEIADENVYQVEMFKGFFPFRRNVLWSEIKRECPLNVAKTHPEWKAYASKLRFGHFEVSKEFFNFLAEYMTQDS</sequence>
<dbReference type="EMBL" id="AE017125">
    <property type="protein sequence ID" value="AAP77659.1"/>
    <property type="molecule type" value="Genomic_DNA"/>
</dbReference>
<dbReference type="RefSeq" id="WP_011115902.1">
    <property type="nucleotide sequence ID" value="NC_004917.1"/>
</dbReference>
<dbReference type="SMR" id="Q7VHA5"/>
<dbReference type="STRING" id="235279.HH_1062"/>
<dbReference type="KEGG" id="hhe:HH_1062"/>
<dbReference type="eggNOG" id="COG1673">
    <property type="taxonomic scope" value="Bacteria"/>
</dbReference>
<dbReference type="HOGENOM" id="CLU_117727_0_0_7"/>
<dbReference type="OrthoDB" id="9793567at2"/>
<dbReference type="Proteomes" id="UP000002495">
    <property type="component" value="Chromosome"/>
</dbReference>
<dbReference type="CDD" id="cd21132">
    <property type="entry name" value="EVE-like"/>
    <property type="match status" value="1"/>
</dbReference>
<dbReference type="Gene3D" id="3.10.590.10">
    <property type="entry name" value="ph1033 like domains"/>
    <property type="match status" value="1"/>
</dbReference>
<dbReference type="HAMAP" id="MF_00771">
    <property type="entry name" value="UPF0310"/>
    <property type="match status" value="1"/>
</dbReference>
<dbReference type="InterPro" id="IPR002740">
    <property type="entry name" value="EVE_domain"/>
</dbReference>
<dbReference type="InterPro" id="IPR015947">
    <property type="entry name" value="PUA-like_sf"/>
</dbReference>
<dbReference type="InterPro" id="IPR022996">
    <property type="entry name" value="UPF0310"/>
</dbReference>
<dbReference type="NCBIfam" id="NF002616">
    <property type="entry name" value="PRK02268.1-2"/>
    <property type="match status" value="1"/>
</dbReference>
<dbReference type="NCBIfam" id="NF002617">
    <property type="entry name" value="PRK02268.1-3"/>
    <property type="match status" value="1"/>
</dbReference>
<dbReference type="Pfam" id="PF01878">
    <property type="entry name" value="EVE"/>
    <property type="match status" value="1"/>
</dbReference>
<dbReference type="SUPFAM" id="SSF88697">
    <property type="entry name" value="PUA domain-like"/>
    <property type="match status" value="1"/>
</dbReference>
<comment type="similarity">
    <text evidence="1">Belongs to the UPF0310 family.</text>
</comment>
<protein>
    <recommendedName>
        <fullName evidence="1">UPF0310 protein HH_1062</fullName>
    </recommendedName>
</protein>
<feature type="chain" id="PRO_0000059630" description="UPF0310 protein HH_1062">
    <location>
        <begin position="1"/>
        <end position="136"/>
    </location>
</feature>
<gene>
    <name type="ordered locus">HH_1062</name>
</gene>
<name>Y1062_HELHP</name>
<reference key="1">
    <citation type="journal article" date="2003" name="Proc. Natl. Acad. Sci. U.S.A.">
        <title>The complete genome sequence of the carcinogenic bacterium Helicobacter hepaticus.</title>
        <authorList>
            <person name="Suerbaum S."/>
            <person name="Josenhans C."/>
            <person name="Sterzenbach T."/>
            <person name="Drescher B."/>
            <person name="Brandt P."/>
            <person name="Bell M."/>
            <person name="Droege M."/>
            <person name="Fartmann B."/>
            <person name="Fischer H.-P."/>
            <person name="Ge Z."/>
            <person name="Hoerster A."/>
            <person name="Holland R."/>
            <person name="Klein K."/>
            <person name="Koenig J."/>
            <person name="Macko L."/>
            <person name="Mendz G.L."/>
            <person name="Nyakatura G."/>
            <person name="Schauer D.B."/>
            <person name="Shen Z."/>
            <person name="Weber J."/>
            <person name="Frosch M."/>
            <person name="Fox J.G."/>
        </authorList>
    </citation>
    <scope>NUCLEOTIDE SEQUENCE [LARGE SCALE GENOMIC DNA]</scope>
    <source>
        <strain>ATCC 51449 / 3B1</strain>
    </source>
</reference>
<keyword id="KW-1185">Reference proteome</keyword>
<proteinExistence type="inferred from homology"/>
<organism>
    <name type="scientific">Helicobacter hepaticus (strain ATCC 51449 / 3B1)</name>
    <dbReference type="NCBI Taxonomy" id="235279"/>
    <lineage>
        <taxon>Bacteria</taxon>
        <taxon>Pseudomonadati</taxon>
        <taxon>Campylobacterota</taxon>
        <taxon>Epsilonproteobacteria</taxon>
        <taxon>Campylobacterales</taxon>
        <taxon>Helicobacteraceae</taxon>
        <taxon>Helicobacter</taxon>
    </lineage>
</organism>
<evidence type="ECO:0000255" key="1">
    <source>
        <dbReference type="HAMAP-Rule" id="MF_00771"/>
    </source>
</evidence>